<keyword id="KW-0560">Oxidoreductase</keyword>
<keyword id="KW-1185">Reference proteome</keyword>
<keyword id="KW-0819">tRNA processing</keyword>
<feature type="chain" id="PRO_0000161543" description="tRNA uridine(34) hydroxylase">
    <location>
        <begin position="1"/>
        <end position="355"/>
    </location>
</feature>
<feature type="domain" description="Rhodanese" evidence="1">
    <location>
        <begin position="146"/>
        <end position="240"/>
    </location>
</feature>
<feature type="region of interest" description="Disordered" evidence="2">
    <location>
        <begin position="333"/>
        <end position="355"/>
    </location>
</feature>
<feature type="active site" description="Cysteine persulfide intermediate" evidence="1">
    <location>
        <position position="200"/>
    </location>
</feature>
<accession>Q8ZDV4</accession>
<accession>Q0WE73</accession>
<accession>Q8D0R3</accession>
<reference key="1">
    <citation type="journal article" date="2001" name="Nature">
        <title>Genome sequence of Yersinia pestis, the causative agent of plague.</title>
        <authorList>
            <person name="Parkhill J."/>
            <person name="Wren B.W."/>
            <person name="Thomson N.R."/>
            <person name="Titball R.W."/>
            <person name="Holden M.T.G."/>
            <person name="Prentice M.B."/>
            <person name="Sebaihia M."/>
            <person name="James K.D."/>
            <person name="Churcher C.M."/>
            <person name="Mungall K.L."/>
            <person name="Baker S."/>
            <person name="Basham D."/>
            <person name="Bentley S.D."/>
            <person name="Brooks K."/>
            <person name="Cerdeno-Tarraga A.-M."/>
            <person name="Chillingworth T."/>
            <person name="Cronin A."/>
            <person name="Davies R.M."/>
            <person name="Davis P."/>
            <person name="Dougan G."/>
            <person name="Feltwell T."/>
            <person name="Hamlin N."/>
            <person name="Holroyd S."/>
            <person name="Jagels K."/>
            <person name="Karlyshev A.V."/>
            <person name="Leather S."/>
            <person name="Moule S."/>
            <person name="Oyston P.C.F."/>
            <person name="Quail M.A."/>
            <person name="Rutherford K.M."/>
            <person name="Simmonds M."/>
            <person name="Skelton J."/>
            <person name="Stevens K."/>
            <person name="Whitehead S."/>
            <person name="Barrell B.G."/>
        </authorList>
    </citation>
    <scope>NUCLEOTIDE SEQUENCE [LARGE SCALE GENOMIC DNA]</scope>
    <source>
        <strain>CO-92 / Biovar Orientalis</strain>
    </source>
</reference>
<reference key="2">
    <citation type="journal article" date="2002" name="J. Bacteriol.">
        <title>Genome sequence of Yersinia pestis KIM.</title>
        <authorList>
            <person name="Deng W."/>
            <person name="Burland V."/>
            <person name="Plunkett G. III"/>
            <person name="Boutin A."/>
            <person name="Mayhew G.F."/>
            <person name="Liss P."/>
            <person name="Perna N.T."/>
            <person name="Rose D.J."/>
            <person name="Mau B."/>
            <person name="Zhou S."/>
            <person name="Schwartz D.C."/>
            <person name="Fetherston J.D."/>
            <person name="Lindler L.E."/>
            <person name="Brubaker R.R."/>
            <person name="Plano G.V."/>
            <person name="Straley S.C."/>
            <person name="McDonough K.A."/>
            <person name="Nilles M.L."/>
            <person name="Matson J.S."/>
            <person name="Blattner F.R."/>
            <person name="Perry R.D."/>
        </authorList>
    </citation>
    <scope>NUCLEOTIDE SEQUENCE [LARGE SCALE GENOMIC DNA]</scope>
    <source>
        <strain>KIM10+ / Biovar Mediaevalis</strain>
    </source>
</reference>
<reference key="3">
    <citation type="journal article" date="2004" name="DNA Res.">
        <title>Complete genome sequence of Yersinia pestis strain 91001, an isolate avirulent to humans.</title>
        <authorList>
            <person name="Song Y."/>
            <person name="Tong Z."/>
            <person name="Wang J."/>
            <person name="Wang L."/>
            <person name="Guo Z."/>
            <person name="Han Y."/>
            <person name="Zhang J."/>
            <person name="Pei D."/>
            <person name="Zhou D."/>
            <person name="Qin H."/>
            <person name="Pang X."/>
            <person name="Han Y."/>
            <person name="Zhai J."/>
            <person name="Li M."/>
            <person name="Cui B."/>
            <person name="Qi Z."/>
            <person name="Jin L."/>
            <person name="Dai R."/>
            <person name="Chen F."/>
            <person name="Li S."/>
            <person name="Ye C."/>
            <person name="Du Z."/>
            <person name="Lin W."/>
            <person name="Wang J."/>
            <person name="Yu J."/>
            <person name="Yang H."/>
            <person name="Wang J."/>
            <person name="Huang P."/>
            <person name="Yang R."/>
        </authorList>
    </citation>
    <scope>NUCLEOTIDE SEQUENCE [LARGE SCALE GENOMIC DNA]</scope>
    <source>
        <strain>91001 / Biovar Mediaevalis</strain>
    </source>
</reference>
<sequence length="355" mass="40550">MPVLHNRISNEELKARMLAETEPRTTVSFYKYFTLEDAKTFRDNLYSQFVKLGVFGRVYVAKEGINAQISVPANRYDEFKIALFASHPALDQVRLNVAHEDDGKSFWVLRLKVRERIVADGIDDDSFDPANIGHYLKADQVNQMIDDPDTLFVDMRNHYEYEVGHFENAIEVPSDTFREQLPMAVDMLQHDKEKNIVMYCTGGIRCEKASAYMLHNGFKNVYHVEGGIIEYARKAKEQGLPLKFIGKNFVFDERMGERISDDVIAHCHQCGTPCDAHTNCKNDGCHLLFIQCPVCAAKFEGCCSQICQEELKLPQEEQRSRRAGRENGIKIFNKSKGLLQATMHIPSPEKSADEK</sequence>
<proteinExistence type="inferred from homology"/>
<protein>
    <recommendedName>
        <fullName evidence="1">tRNA uridine(34) hydroxylase</fullName>
        <ecNumber evidence="1">1.14.-.-</ecNumber>
    </recommendedName>
    <alternativeName>
        <fullName evidence="1">tRNA hydroxylation protein O</fullName>
    </alternativeName>
</protein>
<evidence type="ECO:0000255" key="1">
    <source>
        <dbReference type="HAMAP-Rule" id="MF_00469"/>
    </source>
</evidence>
<evidence type="ECO:0000256" key="2">
    <source>
        <dbReference type="SAM" id="MobiDB-lite"/>
    </source>
</evidence>
<evidence type="ECO:0000305" key="3"/>
<organism>
    <name type="scientific">Yersinia pestis</name>
    <dbReference type="NCBI Taxonomy" id="632"/>
    <lineage>
        <taxon>Bacteria</taxon>
        <taxon>Pseudomonadati</taxon>
        <taxon>Pseudomonadota</taxon>
        <taxon>Gammaproteobacteria</taxon>
        <taxon>Enterobacterales</taxon>
        <taxon>Yersiniaceae</taxon>
        <taxon>Yersinia</taxon>
    </lineage>
</organism>
<comment type="function">
    <text evidence="1">Catalyzes oxygen-dependent 5-hydroxyuridine (ho5U) modification at position 34 in tRNAs.</text>
</comment>
<comment type="catalytic activity">
    <reaction evidence="1">
        <text>uridine(34) in tRNA + AH2 + O2 = 5-hydroxyuridine(34) in tRNA + A + H2O</text>
        <dbReference type="Rhea" id="RHEA:64224"/>
        <dbReference type="Rhea" id="RHEA-COMP:11727"/>
        <dbReference type="Rhea" id="RHEA-COMP:13381"/>
        <dbReference type="ChEBI" id="CHEBI:13193"/>
        <dbReference type="ChEBI" id="CHEBI:15377"/>
        <dbReference type="ChEBI" id="CHEBI:15379"/>
        <dbReference type="ChEBI" id="CHEBI:17499"/>
        <dbReference type="ChEBI" id="CHEBI:65315"/>
        <dbReference type="ChEBI" id="CHEBI:136877"/>
    </reaction>
</comment>
<comment type="similarity">
    <text evidence="1">Belongs to the TrhO family.</text>
</comment>
<comment type="sequence caution" evidence="3">
    <conflict type="erroneous initiation">
        <sequence resource="EMBL-CDS" id="AAM85306"/>
    </conflict>
</comment>
<comment type="sequence caution" evidence="3">
    <conflict type="erroneous initiation">
        <sequence resource="EMBL-CDS" id="AAS62477"/>
    </conflict>
</comment>
<name>TRHO_YERPE</name>
<gene>
    <name evidence="1" type="primary">trhO</name>
    <name type="ordered locus">YPO2451</name>
    <name type="ordered locus">y1738</name>
    <name type="ordered locus">YP_2271</name>
</gene>
<dbReference type="EC" id="1.14.-.-" evidence="1"/>
<dbReference type="EMBL" id="AL590842">
    <property type="protein sequence ID" value="CAL21079.1"/>
    <property type="molecule type" value="Genomic_DNA"/>
</dbReference>
<dbReference type="EMBL" id="AE009952">
    <property type="protein sequence ID" value="AAM85306.1"/>
    <property type="status" value="ALT_INIT"/>
    <property type="molecule type" value="Genomic_DNA"/>
</dbReference>
<dbReference type="EMBL" id="AE017042">
    <property type="protein sequence ID" value="AAS62477.1"/>
    <property type="status" value="ALT_INIT"/>
    <property type="molecule type" value="Genomic_DNA"/>
</dbReference>
<dbReference type="PIR" id="AD0299">
    <property type="entry name" value="AD0299"/>
</dbReference>
<dbReference type="RefSeq" id="WP_002211854.1">
    <property type="nucleotide sequence ID" value="NZ_WUCM01000042.1"/>
</dbReference>
<dbReference type="RefSeq" id="YP_002347415.1">
    <property type="nucleotide sequence ID" value="NC_003143.1"/>
</dbReference>
<dbReference type="SMR" id="Q8ZDV4"/>
<dbReference type="STRING" id="214092.YPO2451"/>
<dbReference type="PaxDb" id="214092-YPO2451"/>
<dbReference type="DNASU" id="1146685"/>
<dbReference type="EnsemblBacteria" id="AAS62477">
    <property type="protein sequence ID" value="AAS62477"/>
    <property type="gene ID" value="YP_2271"/>
</dbReference>
<dbReference type="KEGG" id="ype:YPO2451"/>
<dbReference type="KEGG" id="ypk:y1738"/>
<dbReference type="KEGG" id="ypm:YP_2271"/>
<dbReference type="PATRIC" id="fig|214092.21.peg.2864"/>
<dbReference type="eggNOG" id="COG1054">
    <property type="taxonomic scope" value="Bacteria"/>
</dbReference>
<dbReference type="HOGENOM" id="CLU_038878_1_1_6"/>
<dbReference type="OMA" id="CDTHTNC"/>
<dbReference type="OrthoDB" id="9778326at2"/>
<dbReference type="Proteomes" id="UP000000815">
    <property type="component" value="Chromosome"/>
</dbReference>
<dbReference type="Proteomes" id="UP000001019">
    <property type="component" value="Chromosome"/>
</dbReference>
<dbReference type="Proteomes" id="UP000002490">
    <property type="component" value="Chromosome"/>
</dbReference>
<dbReference type="GO" id="GO:0016705">
    <property type="term" value="F:oxidoreductase activity, acting on paired donors, with incorporation or reduction of molecular oxygen"/>
    <property type="evidence" value="ECO:0007669"/>
    <property type="project" value="UniProtKB-UniRule"/>
</dbReference>
<dbReference type="GO" id="GO:0006400">
    <property type="term" value="P:tRNA modification"/>
    <property type="evidence" value="ECO:0007669"/>
    <property type="project" value="UniProtKB-UniRule"/>
</dbReference>
<dbReference type="CDD" id="cd01518">
    <property type="entry name" value="RHOD_YceA"/>
    <property type="match status" value="1"/>
</dbReference>
<dbReference type="Gene3D" id="3.30.70.100">
    <property type="match status" value="1"/>
</dbReference>
<dbReference type="Gene3D" id="3.40.250.10">
    <property type="entry name" value="Rhodanese-like domain"/>
    <property type="match status" value="1"/>
</dbReference>
<dbReference type="HAMAP" id="MF_00469">
    <property type="entry name" value="TrhO"/>
    <property type="match status" value="1"/>
</dbReference>
<dbReference type="InterPro" id="IPR001763">
    <property type="entry name" value="Rhodanese-like_dom"/>
</dbReference>
<dbReference type="InterPro" id="IPR036873">
    <property type="entry name" value="Rhodanese-like_dom_sf"/>
</dbReference>
<dbReference type="InterPro" id="IPR022111">
    <property type="entry name" value="Rhodanese_C"/>
</dbReference>
<dbReference type="InterPro" id="IPR020936">
    <property type="entry name" value="TrhO"/>
</dbReference>
<dbReference type="InterPro" id="IPR040503">
    <property type="entry name" value="TRHO_N"/>
</dbReference>
<dbReference type="NCBIfam" id="NF001133">
    <property type="entry name" value="PRK00142.1-1"/>
    <property type="match status" value="1"/>
</dbReference>
<dbReference type="PANTHER" id="PTHR43846:SF1">
    <property type="entry name" value="TRNA URIDINE(34) HYDROXYLASE"/>
    <property type="match status" value="1"/>
</dbReference>
<dbReference type="PANTHER" id="PTHR43846">
    <property type="entry name" value="UPF0176 PROTEIN YCEA"/>
    <property type="match status" value="1"/>
</dbReference>
<dbReference type="Pfam" id="PF00581">
    <property type="entry name" value="Rhodanese"/>
    <property type="match status" value="1"/>
</dbReference>
<dbReference type="Pfam" id="PF12368">
    <property type="entry name" value="Rhodanese_C"/>
    <property type="match status" value="1"/>
</dbReference>
<dbReference type="Pfam" id="PF17773">
    <property type="entry name" value="UPF0176_N"/>
    <property type="match status" value="1"/>
</dbReference>
<dbReference type="SMART" id="SM00450">
    <property type="entry name" value="RHOD"/>
    <property type="match status" value="1"/>
</dbReference>
<dbReference type="SUPFAM" id="SSF52821">
    <property type="entry name" value="Rhodanese/Cell cycle control phosphatase"/>
    <property type="match status" value="1"/>
</dbReference>
<dbReference type="PROSITE" id="PS50206">
    <property type="entry name" value="RHODANESE_3"/>
    <property type="match status" value="1"/>
</dbReference>